<dbReference type="EMBL" id="AF401560">
    <property type="protein sequence ID" value="AAK95132.1"/>
    <property type="molecule type" value="mRNA"/>
</dbReference>
<dbReference type="RefSeq" id="NP_001187036.1">
    <property type="nucleotide sequence ID" value="NM_001200107.1"/>
</dbReference>
<dbReference type="SMR" id="Q90YW2"/>
<dbReference type="STRING" id="7998.ENSIPUP00000011996"/>
<dbReference type="GeneID" id="100304523"/>
<dbReference type="KEGG" id="ipu:100304523"/>
<dbReference type="CTD" id="6130"/>
<dbReference type="OrthoDB" id="29563at2759"/>
<dbReference type="Proteomes" id="UP000221080">
    <property type="component" value="Chromosome 28"/>
</dbReference>
<dbReference type="GO" id="GO:0005737">
    <property type="term" value="C:cytoplasm"/>
    <property type="evidence" value="ECO:0007669"/>
    <property type="project" value="UniProtKB-SubCell"/>
</dbReference>
<dbReference type="GO" id="GO:1990904">
    <property type="term" value="C:ribonucleoprotein complex"/>
    <property type="evidence" value="ECO:0007669"/>
    <property type="project" value="UniProtKB-KW"/>
</dbReference>
<dbReference type="GO" id="GO:0005840">
    <property type="term" value="C:ribosome"/>
    <property type="evidence" value="ECO:0007669"/>
    <property type="project" value="UniProtKB-KW"/>
</dbReference>
<dbReference type="GO" id="GO:0003723">
    <property type="term" value="F:RNA binding"/>
    <property type="evidence" value="ECO:0007669"/>
    <property type="project" value="InterPro"/>
</dbReference>
<dbReference type="GO" id="GO:0042254">
    <property type="term" value="P:ribosome biogenesis"/>
    <property type="evidence" value="ECO:0007669"/>
    <property type="project" value="InterPro"/>
</dbReference>
<dbReference type="FunFam" id="3.30.1330.30:FF:000003">
    <property type="entry name" value="60S ribosomal protein L7a"/>
    <property type="match status" value="1"/>
</dbReference>
<dbReference type="Gene3D" id="3.30.1330.30">
    <property type="match status" value="1"/>
</dbReference>
<dbReference type="InterPro" id="IPR050257">
    <property type="entry name" value="eL8/uL1-like"/>
</dbReference>
<dbReference type="InterPro" id="IPR029064">
    <property type="entry name" value="Ribosomal_eL30-like_sf"/>
</dbReference>
<dbReference type="InterPro" id="IPR004037">
    <property type="entry name" value="Ribosomal_eL8-like_CS"/>
</dbReference>
<dbReference type="InterPro" id="IPR004038">
    <property type="entry name" value="Ribosomal_eL8/eL30/eS12/Gad45"/>
</dbReference>
<dbReference type="InterPro" id="IPR018492">
    <property type="entry name" value="Ribosomal_eL8/Nhp2"/>
</dbReference>
<dbReference type="InterPro" id="IPR001921">
    <property type="entry name" value="Ribosomal_eL8_euk"/>
</dbReference>
<dbReference type="PANTHER" id="PTHR23105">
    <property type="entry name" value="RIBOSOMAL PROTEIN L7AE FAMILY MEMBER"/>
    <property type="match status" value="1"/>
</dbReference>
<dbReference type="Pfam" id="PF01248">
    <property type="entry name" value="Ribosomal_L7Ae"/>
    <property type="match status" value="1"/>
</dbReference>
<dbReference type="PRINTS" id="PR00881">
    <property type="entry name" value="L7ARS6FAMILY"/>
</dbReference>
<dbReference type="PRINTS" id="PR00882">
    <property type="entry name" value="RIBOSOMALL7A"/>
</dbReference>
<dbReference type="SUPFAM" id="SSF55315">
    <property type="entry name" value="L30e-like"/>
    <property type="match status" value="1"/>
</dbReference>
<dbReference type="PROSITE" id="PS01082">
    <property type="entry name" value="RIBOSOMAL_L7AE"/>
    <property type="match status" value="1"/>
</dbReference>
<comment type="function">
    <text evidence="2">Component of the large ribosomal subunit. The ribosome is a large ribonucleoprotein complex responsible for the synthesis of proteins in the cell.</text>
</comment>
<comment type="subunit">
    <text evidence="2">Component of the large ribosomal subunit.</text>
</comment>
<comment type="subcellular location">
    <subcellularLocation>
        <location evidence="2">Cytoplasm</location>
    </subcellularLocation>
</comment>
<comment type="similarity">
    <text evidence="4">Belongs to the eukaryotic ribosomal protein eL8 family.</text>
</comment>
<sequence>MPKGKKAKGKKVAPAPSVAKKHEVKKVVNPLFEKRPKNFGIGQDIQPKRDLTRFVKWPRYVRLQRHGSILYKRLKVPPAINQFNQALDRQTATQLFKLAHKYRPETKQEKKRRLLARAEQKAAGKGDVPTKRPPVVRAGVNTVTSLVESKKAQLVVIAHDVDPIELVLFLPALCRKMGVPYCIVKGKARLGRLVHRKTCTSVCFTQTNPEDRAALAKLVEAIKTNYNDRYEEIRRHWGGNIMGPKSTARIAKLEKAKGKELATKLG</sequence>
<reference key="1">
    <citation type="journal article" date="2003" name="Gene">
        <title>Translational machinery of channel catfish: II. Complementary DNA and expression of the complete set of 47 60S ribosomal proteins.</title>
        <authorList>
            <person name="Patterson A.P."/>
            <person name="Karsi A."/>
            <person name="Feng J."/>
            <person name="Liu Z.J."/>
        </authorList>
    </citation>
    <scope>NUCLEOTIDE SEQUENCE [MRNA]</scope>
</reference>
<accession>Q90YW2</accession>
<name>RL7A_ICTPU</name>
<gene>
    <name type="primary">rpl7a</name>
</gene>
<proteinExistence type="evidence at transcript level"/>
<protein>
    <recommendedName>
        <fullName evidence="4">Large ribosomal subunit protein eL8</fullName>
    </recommendedName>
    <alternativeName>
        <fullName>60S ribosomal protein L7a</fullName>
    </alternativeName>
</protein>
<organism>
    <name type="scientific">Ictalurus punctatus</name>
    <name type="common">Channel catfish</name>
    <name type="synonym">Silurus punctatus</name>
    <dbReference type="NCBI Taxonomy" id="7998"/>
    <lineage>
        <taxon>Eukaryota</taxon>
        <taxon>Metazoa</taxon>
        <taxon>Chordata</taxon>
        <taxon>Craniata</taxon>
        <taxon>Vertebrata</taxon>
        <taxon>Euteleostomi</taxon>
        <taxon>Actinopterygii</taxon>
        <taxon>Neopterygii</taxon>
        <taxon>Teleostei</taxon>
        <taxon>Ostariophysi</taxon>
        <taxon>Siluriformes</taxon>
        <taxon>Ictaluridae</taxon>
        <taxon>Ictalurus</taxon>
    </lineage>
</organism>
<keyword id="KW-0963">Cytoplasm</keyword>
<keyword id="KW-0687">Ribonucleoprotein</keyword>
<keyword id="KW-0689">Ribosomal protein</keyword>
<evidence type="ECO:0000250" key="1"/>
<evidence type="ECO:0000250" key="2">
    <source>
        <dbReference type="UniProtKB" id="P62424"/>
    </source>
</evidence>
<evidence type="ECO:0000256" key="3">
    <source>
        <dbReference type="SAM" id="MobiDB-lite"/>
    </source>
</evidence>
<evidence type="ECO:0000305" key="4"/>
<feature type="initiator methionine" description="Removed" evidence="1">
    <location>
        <position position="1"/>
    </location>
</feature>
<feature type="chain" id="PRO_0000136753" description="Large ribosomal subunit protein eL8">
    <location>
        <begin position="2"/>
        <end position="266"/>
    </location>
</feature>
<feature type="region of interest" description="Disordered" evidence="3">
    <location>
        <begin position="1"/>
        <end position="21"/>
    </location>
</feature>
<feature type="compositionally biased region" description="Basic residues" evidence="3">
    <location>
        <begin position="1"/>
        <end position="11"/>
    </location>
</feature>